<feature type="chain" id="PRO_1000086482" description="Large ribosomal subunit protein uL24">
    <location>
        <begin position="1"/>
        <end position="107"/>
    </location>
</feature>
<feature type="sequence conflict" description="In Ref. 2; ACI52707." evidence="2" ref="2">
    <original>V</original>
    <variation>M</variation>
    <location>
        <position position="43"/>
    </location>
</feature>
<comment type="function">
    <text evidence="1">One of two assembly initiator proteins, it binds directly to the 5'-end of the 23S rRNA, where it nucleates assembly of the 50S subunit.</text>
</comment>
<comment type="function">
    <text evidence="1">One of the proteins that surrounds the polypeptide exit tunnel on the outside of the subunit.</text>
</comment>
<comment type="subunit">
    <text evidence="1">Part of the 50S ribosomal subunit.</text>
</comment>
<comment type="similarity">
    <text evidence="1">Belongs to the universal ribosomal protein uL24 family.</text>
</comment>
<comment type="sequence caution" evidence="2">
    <conflict type="erroneous initiation">
        <sequence resource="EMBL-CDS" id="ACI52707"/>
    </conflict>
</comment>
<accession>A9H3N1</accession>
<accession>B5ZIH4</accession>
<protein>
    <recommendedName>
        <fullName evidence="1">Large ribosomal subunit protein uL24</fullName>
    </recommendedName>
    <alternativeName>
        <fullName evidence="2">50S ribosomal protein L24</fullName>
    </alternativeName>
</protein>
<name>RL24_GLUDA</name>
<evidence type="ECO:0000255" key="1">
    <source>
        <dbReference type="HAMAP-Rule" id="MF_01326"/>
    </source>
</evidence>
<evidence type="ECO:0000305" key="2"/>
<gene>
    <name evidence="1" type="primary">rplX</name>
    <name type="ordered locus">GDI3393</name>
    <name type="ordered locus">Gdia_2977</name>
</gene>
<organism>
    <name type="scientific">Gluconacetobacter diazotrophicus (strain ATCC 49037 / DSM 5601 / CCUG 37298 / CIP 103539 / LMG 7603 / PAl5)</name>
    <dbReference type="NCBI Taxonomy" id="272568"/>
    <lineage>
        <taxon>Bacteria</taxon>
        <taxon>Pseudomonadati</taxon>
        <taxon>Pseudomonadota</taxon>
        <taxon>Alphaproteobacteria</taxon>
        <taxon>Acetobacterales</taxon>
        <taxon>Acetobacteraceae</taxon>
        <taxon>Gluconacetobacter</taxon>
    </lineage>
</organism>
<sequence>MMAARIKKGDQVVVITGSSKGSRGEVLSVRPDDNKAVVRGVAVAKRHTRPNRMGEQGGIIEKEMPIHLSNLKLVDPKSGKPTRVGFRILEDGRKVRVAKATGEVVEG</sequence>
<keyword id="KW-1185">Reference proteome</keyword>
<keyword id="KW-0687">Ribonucleoprotein</keyword>
<keyword id="KW-0689">Ribosomal protein</keyword>
<keyword id="KW-0694">RNA-binding</keyword>
<keyword id="KW-0699">rRNA-binding</keyword>
<dbReference type="EMBL" id="AM889285">
    <property type="protein sequence ID" value="CAP57336.1"/>
    <property type="molecule type" value="Genomic_DNA"/>
</dbReference>
<dbReference type="EMBL" id="CP001189">
    <property type="protein sequence ID" value="ACI52707.1"/>
    <property type="status" value="ALT_INIT"/>
    <property type="molecule type" value="Genomic_DNA"/>
</dbReference>
<dbReference type="RefSeq" id="WP_012554691.1">
    <property type="nucleotide sequence ID" value="NC_011365.1"/>
</dbReference>
<dbReference type="SMR" id="A9H3N1"/>
<dbReference type="STRING" id="272568.GDI3393"/>
<dbReference type="KEGG" id="gdi:GDI3393"/>
<dbReference type="KEGG" id="gdj:Gdia_2977"/>
<dbReference type="eggNOG" id="COG0198">
    <property type="taxonomic scope" value="Bacteria"/>
</dbReference>
<dbReference type="HOGENOM" id="CLU_093315_2_0_5"/>
<dbReference type="Proteomes" id="UP000001176">
    <property type="component" value="Chromosome"/>
</dbReference>
<dbReference type="GO" id="GO:1990904">
    <property type="term" value="C:ribonucleoprotein complex"/>
    <property type="evidence" value="ECO:0007669"/>
    <property type="project" value="UniProtKB-KW"/>
</dbReference>
<dbReference type="GO" id="GO:0005840">
    <property type="term" value="C:ribosome"/>
    <property type="evidence" value="ECO:0007669"/>
    <property type="project" value="UniProtKB-KW"/>
</dbReference>
<dbReference type="GO" id="GO:0019843">
    <property type="term" value="F:rRNA binding"/>
    <property type="evidence" value="ECO:0007669"/>
    <property type="project" value="UniProtKB-UniRule"/>
</dbReference>
<dbReference type="GO" id="GO:0003735">
    <property type="term" value="F:structural constituent of ribosome"/>
    <property type="evidence" value="ECO:0007669"/>
    <property type="project" value="InterPro"/>
</dbReference>
<dbReference type="GO" id="GO:0006412">
    <property type="term" value="P:translation"/>
    <property type="evidence" value="ECO:0007669"/>
    <property type="project" value="UniProtKB-UniRule"/>
</dbReference>
<dbReference type="CDD" id="cd06089">
    <property type="entry name" value="KOW_RPL26"/>
    <property type="match status" value="1"/>
</dbReference>
<dbReference type="FunFam" id="2.30.30.30:FF:000004">
    <property type="entry name" value="50S ribosomal protein L24"/>
    <property type="match status" value="1"/>
</dbReference>
<dbReference type="Gene3D" id="2.30.30.30">
    <property type="match status" value="1"/>
</dbReference>
<dbReference type="HAMAP" id="MF_01326_B">
    <property type="entry name" value="Ribosomal_uL24_B"/>
    <property type="match status" value="1"/>
</dbReference>
<dbReference type="InterPro" id="IPR005824">
    <property type="entry name" value="KOW"/>
</dbReference>
<dbReference type="InterPro" id="IPR014722">
    <property type="entry name" value="Rib_uL2_dom2"/>
</dbReference>
<dbReference type="InterPro" id="IPR003256">
    <property type="entry name" value="Ribosomal_uL24"/>
</dbReference>
<dbReference type="InterPro" id="IPR005825">
    <property type="entry name" value="Ribosomal_uL24_CS"/>
</dbReference>
<dbReference type="InterPro" id="IPR041988">
    <property type="entry name" value="Ribosomal_uL24_KOW"/>
</dbReference>
<dbReference type="InterPro" id="IPR008991">
    <property type="entry name" value="Translation_prot_SH3-like_sf"/>
</dbReference>
<dbReference type="NCBIfam" id="TIGR01079">
    <property type="entry name" value="rplX_bact"/>
    <property type="match status" value="1"/>
</dbReference>
<dbReference type="PANTHER" id="PTHR12903">
    <property type="entry name" value="MITOCHONDRIAL RIBOSOMAL PROTEIN L24"/>
    <property type="match status" value="1"/>
</dbReference>
<dbReference type="Pfam" id="PF00467">
    <property type="entry name" value="KOW"/>
    <property type="match status" value="1"/>
</dbReference>
<dbReference type="Pfam" id="PF17136">
    <property type="entry name" value="ribosomal_L24"/>
    <property type="match status" value="1"/>
</dbReference>
<dbReference type="SMART" id="SM00739">
    <property type="entry name" value="KOW"/>
    <property type="match status" value="1"/>
</dbReference>
<dbReference type="SUPFAM" id="SSF50104">
    <property type="entry name" value="Translation proteins SH3-like domain"/>
    <property type="match status" value="1"/>
</dbReference>
<dbReference type="PROSITE" id="PS01108">
    <property type="entry name" value="RIBOSOMAL_L24"/>
    <property type="match status" value="1"/>
</dbReference>
<proteinExistence type="inferred from homology"/>
<reference key="1">
    <citation type="journal article" date="2009" name="BMC Genomics">
        <title>Complete genome sequence of the sugarcane nitrogen-fixing endophyte Gluconacetobacter diazotrophicus Pal5.</title>
        <authorList>
            <person name="Bertalan M."/>
            <person name="Albano R."/>
            <person name="de Padua V."/>
            <person name="Rouws L."/>
            <person name="Rojas C."/>
            <person name="Hemerly A."/>
            <person name="Teixeira K."/>
            <person name="Schwab S."/>
            <person name="Araujo J."/>
            <person name="Oliveira A."/>
            <person name="Franca L."/>
            <person name="Magalhaes V."/>
            <person name="Alqueres S."/>
            <person name="Cardoso A."/>
            <person name="Almeida W."/>
            <person name="Loureiro M.M."/>
            <person name="Nogueira E."/>
            <person name="Cidade D."/>
            <person name="Oliveira D."/>
            <person name="Simao T."/>
            <person name="Macedo J."/>
            <person name="Valadao A."/>
            <person name="Dreschsel M."/>
            <person name="Freitas F."/>
            <person name="Vidal M."/>
            <person name="Guedes H."/>
            <person name="Rodrigues E."/>
            <person name="Meneses C."/>
            <person name="Brioso P."/>
            <person name="Pozzer L."/>
            <person name="Figueiredo D."/>
            <person name="Montano H."/>
            <person name="Junior J."/>
            <person name="de Souza Filho G."/>
            <person name="Martin Quintana Flores V."/>
            <person name="Ferreira B."/>
            <person name="Branco A."/>
            <person name="Gonzalez P."/>
            <person name="Guillobel H."/>
            <person name="Lemos M."/>
            <person name="Seibel L."/>
            <person name="Macedo J."/>
            <person name="Alves-Ferreira M."/>
            <person name="Sachetto-Martins G."/>
            <person name="Coelho A."/>
            <person name="Santos E."/>
            <person name="Amaral G."/>
            <person name="Neves A."/>
            <person name="Pacheco A.B."/>
            <person name="Carvalho D."/>
            <person name="Lery L."/>
            <person name="Bisch P."/>
            <person name="Rossle S.C."/>
            <person name="Urmenyi T."/>
            <person name="Rael Pereira A."/>
            <person name="Silva R."/>
            <person name="Rondinelli E."/>
            <person name="von Kruger W."/>
            <person name="Martins O."/>
            <person name="Baldani J.I."/>
            <person name="Ferreira P.C."/>
        </authorList>
    </citation>
    <scope>NUCLEOTIDE SEQUENCE [LARGE SCALE GENOMIC DNA]</scope>
    <source>
        <strain>ATCC 49037 / DSM 5601 / CCUG 37298 / CIP 103539 / LMG 7603 / PAl5</strain>
    </source>
</reference>
<reference key="2">
    <citation type="journal article" date="2010" name="Stand. Genomic Sci.">
        <title>Two genome sequences of the same bacterial strain, Gluconacetobacter diazotrophicus PAl 5, suggest a new standard in genome sequence submission.</title>
        <authorList>
            <person name="Giongo A."/>
            <person name="Tyler H.L."/>
            <person name="Zipperer U.N."/>
            <person name="Triplett E.W."/>
        </authorList>
    </citation>
    <scope>NUCLEOTIDE SEQUENCE [LARGE SCALE GENOMIC DNA]</scope>
    <source>
        <strain>ATCC 49037 / DSM 5601 / CCUG 37298 / CIP 103539 / LMG 7603 / PAl5</strain>
    </source>
</reference>